<accession>A6T765</accession>
<dbReference type="EMBL" id="CP000647">
    <property type="protein sequence ID" value="ABR76436.1"/>
    <property type="molecule type" value="Genomic_DNA"/>
</dbReference>
<dbReference type="RefSeq" id="WP_002898441.1">
    <property type="nucleotide sequence ID" value="NC_009648.1"/>
</dbReference>
<dbReference type="SMR" id="A6T765"/>
<dbReference type="STRING" id="272620.KPN_01000"/>
<dbReference type="PaxDb" id="272620-KPN_01000"/>
<dbReference type="EnsemblBacteria" id="ABR76436">
    <property type="protein sequence ID" value="ABR76436"/>
    <property type="gene ID" value="KPN_01000"/>
</dbReference>
<dbReference type="KEGG" id="kpn:KPN_01000"/>
<dbReference type="HOGENOM" id="CLU_123865_1_0_6"/>
<dbReference type="Proteomes" id="UP000000265">
    <property type="component" value="Chromosome"/>
</dbReference>
<dbReference type="GO" id="GO:0005737">
    <property type="term" value="C:cytoplasm"/>
    <property type="evidence" value="ECO:0007669"/>
    <property type="project" value="UniProtKB-SubCell"/>
</dbReference>
<dbReference type="GO" id="GO:0003677">
    <property type="term" value="F:DNA binding"/>
    <property type="evidence" value="ECO:0007669"/>
    <property type="project" value="InterPro"/>
</dbReference>
<dbReference type="GO" id="GO:0009408">
    <property type="term" value="P:response to heat"/>
    <property type="evidence" value="ECO:0007669"/>
    <property type="project" value="UniProtKB-UniRule"/>
</dbReference>
<dbReference type="Gene3D" id="2.30.30.390">
    <property type="entry name" value="Hemimethylated DNA-binding domain"/>
    <property type="match status" value="1"/>
</dbReference>
<dbReference type="HAMAP" id="MF_01194">
    <property type="entry name" value="HspQ"/>
    <property type="match status" value="1"/>
</dbReference>
<dbReference type="InterPro" id="IPR011722">
    <property type="entry name" value="Hemimethylated_DNA-bd_dom"/>
</dbReference>
<dbReference type="InterPro" id="IPR036623">
    <property type="entry name" value="Hemimethylated_DNA-bd_sf"/>
</dbReference>
<dbReference type="InterPro" id="IPR022866">
    <property type="entry name" value="HspQ"/>
</dbReference>
<dbReference type="NCBIfam" id="NF010729">
    <property type="entry name" value="PRK14129.1"/>
    <property type="match status" value="1"/>
</dbReference>
<dbReference type="NCBIfam" id="TIGR02097">
    <property type="entry name" value="yccV"/>
    <property type="match status" value="1"/>
</dbReference>
<dbReference type="Pfam" id="PF08755">
    <property type="entry name" value="YccV-like"/>
    <property type="match status" value="1"/>
</dbReference>
<dbReference type="SMART" id="SM00992">
    <property type="entry name" value="YccV-like"/>
    <property type="match status" value="1"/>
</dbReference>
<dbReference type="SUPFAM" id="SSF141255">
    <property type="entry name" value="YccV-like"/>
    <property type="match status" value="1"/>
</dbReference>
<feature type="chain" id="PRO_0000315307" description="Heat shock protein HspQ">
    <location>
        <begin position="1"/>
        <end position="105"/>
    </location>
</feature>
<evidence type="ECO:0000255" key="1">
    <source>
        <dbReference type="HAMAP-Rule" id="MF_01194"/>
    </source>
</evidence>
<name>HSPQ_KLEP7</name>
<comment type="function">
    <text evidence="1">Involved in the degradation of certain denaturated proteins, including DnaA, during heat shock stress.</text>
</comment>
<comment type="subcellular location">
    <subcellularLocation>
        <location evidence="1">Cytoplasm</location>
    </subcellularLocation>
</comment>
<comment type="similarity">
    <text evidence="1">Belongs to the HspQ family.</text>
</comment>
<organism>
    <name type="scientific">Klebsiella pneumoniae subsp. pneumoniae (strain ATCC 700721 / MGH 78578)</name>
    <dbReference type="NCBI Taxonomy" id="272620"/>
    <lineage>
        <taxon>Bacteria</taxon>
        <taxon>Pseudomonadati</taxon>
        <taxon>Pseudomonadota</taxon>
        <taxon>Gammaproteobacteria</taxon>
        <taxon>Enterobacterales</taxon>
        <taxon>Enterobacteriaceae</taxon>
        <taxon>Klebsiella/Raoultella group</taxon>
        <taxon>Klebsiella</taxon>
        <taxon>Klebsiella pneumoniae complex</taxon>
    </lineage>
</organism>
<reference key="1">
    <citation type="submission" date="2006-09" db="EMBL/GenBank/DDBJ databases">
        <authorList>
            <consortium name="The Klebsiella pneumonia Genome Sequencing Project"/>
            <person name="McClelland M."/>
            <person name="Sanderson E.K."/>
            <person name="Spieth J."/>
            <person name="Clifton W.S."/>
            <person name="Latreille P."/>
            <person name="Sabo A."/>
            <person name="Pepin K."/>
            <person name="Bhonagiri V."/>
            <person name="Porwollik S."/>
            <person name="Ali J."/>
            <person name="Wilson R.K."/>
        </authorList>
    </citation>
    <scope>NUCLEOTIDE SEQUENCE [LARGE SCALE GENOMIC DNA]</scope>
    <source>
        <strain>ATCC 700721 / MGH 78578</strain>
    </source>
</reference>
<keyword id="KW-0963">Cytoplasm</keyword>
<keyword id="KW-0346">Stress response</keyword>
<proteinExistence type="inferred from homology"/>
<protein>
    <recommendedName>
        <fullName evidence="1">Heat shock protein HspQ</fullName>
    </recommendedName>
</protein>
<gene>
    <name evidence="1" type="primary">hspQ</name>
    <name type="ordered locus">KPN78578_09750</name>
    <name type="ORF">KPN_01000</name>
</gene>
<sequence>MIASKFGIGQQVRHTLLGYLGVIVDVDPEYSLAEPEEDEIAANDELRAAPWYHVVMEDDDGQPIHTYLAEAQLSSETRDEHPEQPSLDELAKTIRQQLQAPRLRN</sequence>